<name>SYP_ACAM1</name>
<comment type="function">
    <text evidence="1">Catalyzes the attachment of proline to tRNA(Pro) in a two-step reaction: proline is first activated by ATP to form Pro-AMP and then transferred to the acceptor end of tRNA(Pro). As ProRS can inadvertently accommodate and process non-cognate amino acids such as alanine and cysteine, to avoid such errors it has two additional distinct editing activities against alanine. One activity is designated as 'pretransfer' editing and involves the tRNA(Pro)-independent hydrolysis of activated Ala-AMP. The other activity is designated 'posttransfer' editing and involves deacylation of mischarged Ala-tRNA(Pro). The misacylated Cys-tRNA(Pro) is not edited by ProRS.</text>
</comment>
<comment type="catalytic activity">
    <reaction evidence="1">
        <text>tRNA(Pro) + L-proline + ATP = L-prolyl-tRNA(Pro) + AMP + diphosphate</text>
        <dbReference type="Rhea" id="RHEA:14305"/>
        <dbReference type="Rhea" id="RHEA-COMP:9700"/>
        <dbReference type="Rhea" id="RHEA-COMP:9702"/>
        <dbReference type="ChEBI" id="CHEBI:30616"/>
        <dbReference type="ChEBI" id="CHEBI:33019"/>
        <dbReference type="ChEBI" id="CHEBI:60039"/>
        <dbReference type="ChEBI" id="CHEBI:78442"/>
        <dbReference type="ChEBI" id="CHEBI:78532"/>
        <dbReference type="ChEBI" id="CHEBI:456215"/>
        <dbReference type="EC" id="6.1.1.15"/>
    </reaction>
</comment>
<comment type="subunit">
    <text evidence="1">Homodimer.</text>
</comment>
<comment type="subcellular location">
    <subcellularLocation>
        <location evidence="1">Cytoplasm</location>
    </subcellularLocation>
</comment>
<comment type="domain">
    <text evidence="1">Consists of three domains: the N-terminal catalytic domain, the editing domain and the C-terminal anticodon-binding domain.</text>
</comment>
<comment type="similarity">
    <text evidence="1">Belongs to the class-II aminoacyl-tRNA synthetase family. ProS type 1 subfamily.</text>
</comment>
<reference key="1">
    <citation type="journal article" date="2008" name="Proc. Natl. Acad. Sci. U.S.A.">
        <title>Niche adaptation and genome expansion in the chlorophyll d-producing cyanobacterium Acaryochloris marina.</title>
        <authorList>
            <person name="Swingley W.D."/>
            <person name="Chen M."/>
            <person name="Cheung P.C."/>
            <person name="Conrad A.L."/>
            <person name="Dejesa L.C."/>
            <person name="Hao J."/>
            <person name="Honchak B.M."/>
            <person name="Karbach L.E."/>
            <person name="Kurdoglu A."/>
            <person name="Lahiri S."/>
            <person name="Mastrian S.D."/>
            <person name="Miyashita H."/>
            <person name="Page L."/>
            <person name="Ramakrishna P."/>
            <person name="Satoh S."/>
            <person name="Sattley W.M."/>
            <person name="Shimada Y."/>
            <person name="Taylor H.L."/>
            <person name="Tomo T."/>
            <person name="Tsuchiya T."/>
            <person name="Wang Z.T."/>
            <person name="Raymond J."/>
            <person name="Mimuro M."/>
            <person name="Blankenship R.E."/>
            <person name="Touchman J.W."/>
        </authorList>
    </citation>
    <scope>NUCLEOTIDE SEQUENCE [LARGE SCALE GENOMIC DNA]</scope>
    <source>
        <strain>MBIC 11017</strain>
    </source>
</reference>
<evidence type="ECO:0000255" key="1">
    <source>
        <dbReference type="HAMAP-Rule" id="MF_01569"/>
    </source>
</evidence>
<dbReference type="EC" id="6.1.1.15" evidence="1"/>
<dbReference type="EMBL" id="CP000828">
    <property type="protein sequence ID" value="ABW27331.1"/>
    <property type="molecule type" value="Genomic_DNA"/>
</dbReference>
<dbReference type="RefSeq" id="WP_012162805.1">
    <property type="nucleotide sequence ID" value="NC_009925.1"/>
</dbReference>
<dbReference type="SMR" id="B0C230"/>
<dbReference type="STRING" id="329726.AM1_2321"/>
<dbReference type="KEGG" id="amr:AM1_2321"/>
<dbReference type="eggNOG" id="COG0442">
    <property type="taxonomic scope" value="Bacteria"/>
</dbReference>
<dbReference type="HOGENOM" id="CLU_016739_0_0_3"/>
<dbReference type="OrthoDB" id="9809052at2"/>
<dbReference type="Proteomes" id="UP000000268">
    <property type="component" value="Chromosome"/>
</dbReference>
<dbReference type="GO" id="GO:0005829">
    <property type="term" value="C:cytosol"/>
    <property type="evidence" value="ECO:0007669"/>
    <property type="project" value="TreeGrafter"/>
</dbReference>
<dbReference type="GO" id="GO:0002161">
    <property type="term" value="F:aminoacyl-tRNA deacylase activity"/>
    <property type="evidence" value="ECO:0007669"/>
    <property type="project" value="InterPro"/>
</dbReference>
<dbReference type="GO" id="GO:0005524">
    <property type="term" value="F:ATP binding"/>
    <property type="evidence" value="ECO:0007669"/>
    <property type="project" value="UniProtKB-UniRule"/>
</dbReference>
<dbReference type="GO" id="GO:0004827">
    <property type="term" value="F:proline-tRNA ligase activity"/>
    <property type="evidence" value="ECO:0007669"/>
    <property type="project" value="UniProtKB-UniRule"/>
</dbReference>
<dbReference type="GO" id="GO:0006433">
    <property type="term" value="P:prolyl-tRNA aminoacylation"/>
    <property type="evidence" value="ECO:0007669"/>
    <property type="project" value="UniProtKB-UniRule"/>
</dbReference>
<dbReference type="CDD" id="cd04334">
    <property type="entry name" value="ProRS-INS"/>
    <property type="match status" value="1"/>
</dbReference>
<dbReference type="CDD" id="cd00861">
    <property type="entry name" value="ProRS_anticodon_short"/>
    <property type="match status" value="1"/>
</dbReference>
<dbReference type="CDD" id="cd00779">
    <property type="entry name" value="ProRS_core_prok"/>
    <property type="match status" value="1"/>
</dbReference>
<dbReference type="FunFam" id="3.40.50.800:FF:000011">
    <property type="entry name" value="Proline--tRNA ligase"/>
    <property type="match status" value="1"/>
</dbReference>
<dbReference type="Gene3D" id="3.40.50.800">
    <property type="entry name" value="Anticodon-binding domain"/>
    <property type="match status" value="1"/>
</dbReference>
<dbReference type="Gene3D" id="3.30.930.10">
    <property type="entry name" value="Bira Bifunctional Protein, Domain 2"/>
    <property type="match status" value="2"/>
</dbReference>
<dbReference type="HAMAP" id="MF_01569">
    <property type="entry name" value="Pro_tRNA_synth_type1"/>
    <property type="match status" value="1"/>
</dbReference>
<dbReference type="InterPro" id="IPR002314">
    <property type="entry name" value="aa-tRNA-synt_IIb"/>
</dbReference>
<dbReference type="InterPro" id="IPR006195">
    <property type="entry name" value="aa-tRNA-synth_II"/>
</dbReference>
<dbReference type="InterPro" id="IPR045864">
    <property type="entry name" value="aa-tRNA-synth_II/BPL/LPL"/>
</dbReference>
<dbReference type="InterPro" id="IPR004154">
    <property type="entry name" value="Anticodon-bd"/>
</dbReference>
<dbReference type="InterPro" id="IPR036621">
    <property type="entry name" value="Anticodon-bd_dom_sf"/>
</dbReference>
<dbReference type="InterPro" id="IPR002316">
    <property type="entry name" value="Pro-tRNA-ligase_IIa"/>
</dbReference>
<dbReference type="InterPro" id="IPR004500">
    <property type="entry name" value="Pro-tRNA-synth_IIa_bac-type"/>
</dbReference>
<dbReference type="InterPro" id="IPR023717">
    <property type="entry name" value="Pro-tRNA-Synthase_IIa_type1"/>
</dbReference>
<dbReference type="InterPro" id="IPR050062">
    <property type="entry name" value="Pro-tRNA_synthetase"/>
</dbReference>
<dbReference type="InterPro" id="IPR044140">
    <property type="entry name" value="ProRS_anticodon_short"/>
</dbReference>
<dbReference type="InterPro" id="IPR033730">
    <property type="entry name" value="ProRS_core_prok"/>
</dbReference>
<dbReference type="InterPro" id="IPR036754">
    <property type="entry name" value="YbaK/aa-tRNA-synt-asso_dom_sf"/>
</dbReference>
<dbReference type="InterPro" id="IPR007214">
    <property type="entry name" value="YbaK/aa-tRNA-synth-assoc-dom"/>
</dbReference>
<dbReference type="NCBIfam" id="NF006625">
    <property type="entry name" value="PRK09194.1"/>
    <property type="match status" value="1"/>
</dbReference>
<dbReference type="NCBIfam" id="TIGR00409">
    <property type="entry name" value="proS_fam_II"/>
    <property type="match status" value="1"/>
</dbReference>
<dbReference type="PANTHER" id="PTHR42753">
    <property type="entry name" value="MITOCHONDRIAL RIBOSOME PROTEIN L39/PROLYL-TRNA LIGASE FAMILY MEMBER"/>
    <property type="match status" value="1"/>
</dbReference>
<dbReference type="PANTHER" id="PTHR42753:SF2">
    <property type="entry name" value="PROLINE--TRNA LIGASE"/>
    <property type="match status" value="1"/>
</dbReference>
<dbReference type="Pfam" id="PF03129">
    <property type="entry name" value="HGTP_anticodon"/>
    <property type="match status" value="1"/>
</dbReference>
<dbReference type="Pfam" id="PF00587">
    <property type="entry name" value="tRNA-synt_2b"/>
    <property type="match status" value="1"/>
</dbReference>
<dbReference type="Pfam" id="PF04073">
    <property type="entry name" value="tRNA_edit"/>
    <property type="match status" value="1"/>
</dbReference>
<dbReference type="PRINTS" id="PR01046">
    <property type="entry name" value="TRNASYNTHPRO"/>
</dbReference>
<dbReference type="SUPFAM" id="SSF52954">
    <property type="entry name" value="Class II aaRS ABD-related"/>
    <property type="match status" value="1"/>
</dbReference>
<dbReference type="SUPFAM" id="SSF55681">
    <property type="entry name" value="Class II aaRS and biotin synthetases"/>
    <property type="match status" value="1"/>
</dbReference>
<dbReference type="SUPFAM" id="SSF55826">
    <property type="entry name" value="YbaK/ProRS associated domain"/>
    <property type="match status" value="1"/>
</dbReference>
<dbReference type="PROSITE" id="PS50862">
    <property type="entry name" value="AA_TRNA_LIGASE_II"/>
    <property type="match status" value="1"/>
</dbReference>
<organism>
    <name type="scientific">Acaryochloris marina (strain MBIC 11017)</name>
    <dbReference type="NCBI Taxonomy" id="329726"/>
    <lineage>
        <taxon>Bacteria</taxon>
        <taxon>Bacillati</taxon>
        <taxon>Cyanobacteriota</taxon>
        <taxon>Cyanophyceae</taxon>
        <taxon>Acaryochloridales</taxon>
        <taxon>Acaryochloridaceae</taxon>
        <taxon>Acaryochloris</taxon>
    </lineage>
</organism>
<protein>
    <recommendedName>
        <fullName evidence="1">Proline--tRNA ligase</fullName>
        <ecNumber evidence="1">6.1.1.15</ecNumber>
    </recommendedName>
    <alternativeName>
        <fullName evidence="1">Prolyl-tRNA synthetase</fullName>
        <shortName evidence="1">ProRS</shortName>
    </alternativeName>
</protein>
<proteinExistence type="inferred from homology"/>
<feature type="chain" id="PRO_1000087832" description="Proline--tRNA ligase">
    <location>
        <begin position="1"/>
        <end position="600"/>
    </location>
</feature>
<accession>B0C230</accession>
<sequence length="600" mass="66372">MRLSQMLFVTLREDPAEAEIPSHKLLLRAGYIRRVGSGIYAYLPLMWRVLQKVSQIVREEMDAAGAQECLLPQIQPAELWQESGRWDTYTQAEGIMFALQDRQDRELGLGPTHEEVITAVARDMIRSYRQLPLNLYQIQTKFRDEIRPRFGLMRGREFIMKDAYSFSTDEADLKIIYSKMHDAYCNILQRSGLAYRAVDADSGAIGGSGSQEFMVLAEAGEDEVLYTDDGKYAANVEKAVSRPADAQPSSFKSVEKKETPKTDTIAKLCDCLQCSPTQVVKTVLYEAVYDNGQTLLALVSLRGDQSVNEVKLQNELVQLGDVVKGKALIALTVAEGGTKWASQPLPLGYIAPDLADSYIQKSKQVHGKFVRLVDQTAVDLKNFVTGANEVGIHQVGVNWKTDIPLPKHVVDIRTAQVGDRAVHDPKQTLQTARGIEIGHIFQLGTKYSQALGATYTNEAGKEQPLVMGCYGVGVSRLAQAAVEQSYDKDGIVWPVAIAPYHAIIIIPNGKDSDQVEAAEKLYSELNAAGIETLLDDRTERAGVKFKDADLIGIPYRIVTGRSLKEGNVEMVERATHDAHQIALDQVLPTLKEYLAKAIST</sequence>
<gene>
    <name evidence="1" type="primary">proS</name>
    <name type="ordered locus">AM1_2321</name>
</gene>
<keyword id="KW-0030">Aminoacyl-tRNA synthetase</keyword>
<keyword id="KW-0067">ATP-binding</keyword>
<keyword id="KW-0963">Cytoplasm</keyword>
<keyword id="KW-0436">Ligase</keyword>
<keyword id="KW-0547">Nucleotide-binding</keyword>
<keyword id="KW-0648">Protein biosynthesis</keyword>
<keyword id="KW-1185">Reference proteome</keyword>